<proteinExistence type="inferred from homology"/>
<protein>
    <recommendedName>
        <fullName>Putative antiporter subunit mnhA2</fullName>
    </recommendedName>
    <alternativeName>
        <fullName>Mrp complex subunit A2</fullName>
    </alternativeName>
    <alternativeName>
        <fullName>Putative NADH-ubiquinone oxidoreductase subunit mnhA2</fullName>
    </alternativeName>
</protein>
<gene>
    <name type="primary">mnhA2</name>
    <name type="synonym">mrpA2</name>
    <name type="ordered locus">SAR0630</name>
</gene>
<keyword id="KW-0050">Antiport</keyword>
<keyword id="KW-1003">Cell membrane</keyword>
<keyword id="KW-0406">Ion transport</keyword>
<keyword id="KW-0472">Membrane</keyword>
<keyword id="KW-0812">Transmembrane</keyword>
<keyword id="KW-1133">Transmembrane helix</keyword>
<keyword id="KW-0813">Transport</keyword>
<comment type="subunit">
    <text evidence="1">May form a heterooligomeric complex that consists of seven subunits: mnhA2, mnhB2, mnhC2, mnhD2, mnhE2, mnhF2 and mnhG2.</text>
</comment>
<comment type="subcellular location">
    <subcellularLocation>
        <location evidence="3">Cell membrane</location>
        <topology evidence="3">Multi-pass membrane protein</topology>
    </subcellularLocation>
</comment>
<comment type="similarity">
    <text evidence="3">Belongs to the CPA3 antiporters (TC 2.A.63) subunit A family.</text>
</comment>
<reference key="1">
    <citation type="journal article" date="2004" name="Proc. Natl. Acad. Sci. U.S.A.">
        <title>Complete genomes of two clinical Staphylococcus aureus strains: evidence for the rapid evolution of virulence and drug resistance.</title>
        <authorList>
            <person name="Holden M.T.G."/>
            <person name="Feil E.J."/>
            <person name="Lindsay J.A."/>
            <person name="Peacock S.J."/>
            <person name="Day N.P.J."/>
            <person name="Enright M.C."/>
            <person name="Foster T.J."/>
            <person name="Moore C.E."/>
            <person name="Hurst L."/>
            <person name="Atkin R."/>
            <person name="Barron A."/>
            <person name="Bason N."/>
            <person name="Bentley S.D."/>
            <person name="Chillingworth C."/>
            <person name="Chillingworth T."/>
            <person name="Churcher C."/>
            <person name="Clark L."/>
            <person name="Corton C."/>
            <person name="Cronin A."/>
            <person name="Doggett J."/>
            <person name="Dowd L."/>
            <person name="Feltwell T."/>
            <person name="Hance Z."/>
            <person name="Harris B."/>
            <person name="Hauser H."/>
            <person name="Holroyd S."/>
            <person name="Jagels K."/>
            <person name="James K.D."/>
            <person name="Lennard N."/>
            <person name="Line A."/>
            <person name="Mayes R."/>
            <person name="Moule S."/>
            <person name="Mungall K."/>
            <person name="Ormond D."/>
            <person name="Quail M.A."/>
            <person name="Rabbinowitsch E."/>
            <person name="Rutherford K.M."/>
            <person name="Sanders M."/>
            <person name="Sharp S."/>
            <person name="Simmonds M."/>
            <person name="Stevens K."/>
            <person name="Whitehead S."/>
            <person name="Barrell B.G."/>
            <person name="Spratt B.G."/>
            <person name="Parkhill J."/>
        </authorList>
    </citation>
    <scope>NUCLEOTIDE SEQUENCE [LARGE SCALE GENOMIC DNA]</scope>
    <source>
        <strain>MRSA252</strain>
    </source>
</reference>
<sequence length="800" mass="89689">MSLVYLLIAILVIMAMILLTSKRRAMAKYAGYIALTAPVIASIYFLLQVPSVIKQHYLSVSIPWMTSLDINVDLRLDGLSLMFSLIISLIGIAVFFYATQYLSSRKDNLPRFYLYLTLFMFSMLGIVLADNTILMYVFWELTSVSSFLLISYWYNNGDSQFGAMQSFMITVFGGLALLVGFIMLYIMTGTNNITEILGQADHIKNHALFIPMIIMFLLGAFTKSAQFPFHIWLPRAMAAPTPVSAYLHSATMVKAGIFLLLRFTPLLGLSNMYIYIVTFVGLITMLFGSITALKQWDLKGILAYSTISQLGMIMAMVGIGGGYAQHQQDAIASIYVFVLFAALFHLMNHAIFKCALFMGVGILDHEAGSRDIRILSGMRQLFPKMNLVMMIAALSMAGVPFLNGFLSKEMFLDALTQTGQLSQFSLISMIIIVCMGVIASIFTFTYALYMVKEVFWTKYDSKVFTKKNIHEPWLFSLPSLILMVLVPVIFFVPNIFGKGIIVPALRGVSGGNHQIDPLVPHVSQWHGFNIPLLLTIIIILLGSVLAIKVDWKKVFTGKIRQISVSKGYEMVYRQFEKFTTKRFKRVMQDRLNQYIIMTLGIFMVIIGYGYIRIGLPKVHQLHVSEFGPLEVILAIVTVIIGLSLIFIRQRLTMVILNGVIGFVVTLFFIAMKAPDLALTQLVVETITTILFIVSFSRLPNVPRSKVNKKREIIKISVSLMMALIVVSLIFIAQQADGLASISNFYLRADKLTGGKNIVNAILGDFRALDTLFEGLVLIITGLGIYTLLNYQDRRGQDERE</sequence>
<feature type="chain" id="PRO_0000372288" description="Putative antiporter subunit mnhA2">
    <location>
        <begin position="1"/>
        <end position="800"/>
    </location>
</feature>
<feature type="transmembrane region" description="Helical" evidence="2">
    <location>
        <begin position="1"/>
        <end position="21"/>
    </location>
</feature>
<feature type="transmembrane region" description="Helical" evidence="2">
    <location>
        <begin position="33"/>
        <end position="53"/>
    </location>
</feature>
<feature type="transmembrane region" description="Helical" evidence="2">
    <location>
        <begin position="78"/>
        <end position="98"/>
    </location>
</feature>
<feature type="transmembrane region" description="Helical" evidence="2">
    <location>
        <begin position="118"/>
        <end position="138"/>
    </location>
</feature>
<feature type="transmembrane region" description="Helical" evidence="2">
    <location>
        <begin position="167"/>
        <end position="187"/>
    </location>
</feature>
<feature type="transmembrane region" description="Helical" evidence="2">
    <location>
        <begin position="207"/>
        <end position="227"/>
    </location>
</feature>
<feature type="transmembrane region" description="Helical" evidence="2">
    <location>
        <begin position="241"/>
        <end position="261"/>
    </location>
</feature>
<feature type="transmembrane region" description="Helical" evidence="2">
    <location>
        <begin position="273"/>
        <end position="293"/>
    </location>
</feature>
<feature type="transmembrane region" description="Helical" evidence="2">
    <location>
        <begin position="300"/>
        <end position="320"/>
    </location>
</feature>
<feature type="transmembrane region" description="Helical" evidence="2">
    <location>
        <begin position="331"/>
        <end position="351"/>
    </location>
</feature>
<feature type="transmembrane region" description="Helical" evidence="2">
    <location>
        <begin position="387"/>
        <end position="407"/>
    </location>
</feature>
<feature type="transmembrane region" description="Helical" evidence="2">
    <location>
        <begin position="424"/>
        <end position="444"/>
    </location>
</feature>
<feature type="transmembrane region" description="Helical" evidence="2">
    <location>
        <begin position="472"/>
        <end position="492"/>
    </location>
</feature>
<feature type="transmembrane region" description="Helical" evidence="2">
    <location>
        <begin position="527"/>
        <end position="547"/>
    </location>
</feature>
<feature type="transmembrane region" description="Helical" evidence="2">
    <location>
        <begin position="595"/>
        <end position="615"/>
    </location>
</feature>
<feature type="transmembrane region" description="Helical" evidence="2">
    <location>
        <begin position="627"/>
        <end position="647"/>
    </location>
</feature>
<feature type="transmembrane region" description="Helical" evidence="2">
    <location>
        <begin position="651"/>
        <end position="671"/>
    </location>
</feature>
<feature type="transmembrane region" description="Helical" evidence="2">
    <location>
        <begin position="676"/>
        <end position="696"/>
    </location>
</feature>
<feature type="transmembrane region" description="Helical" evidence="2">
    <location>
        <begin position="712"/>
        <end position="732"/>
    </location>
</feature>
<feature type="transmembrane region" description="Helical" evidence="2">
    <location>
        <begin position="768"/>
        <end position="788"/>
    </location>
</feature>
<name>MNHA2_STAAR</name>
<evidence type="ECO:0000250" key="1"/>
<evidence type="ECO:0000255" key="2"/>
<evidence type="ECO:0000305" key="3"/>
<dbReference type="EMBL" id="BX571856">
    <property type="protein sequence ID" value="CAG39648.1"/>
    <property type="molecule type" value="Genomic_DNA"/>
</dbReference>
<dbReference type="RefSeq" id="WP_000060783.1">
    <property type="nucleotide sequence ID" value="NC_002952.2"/>
</dbReference>
<dbReference type="SMR" id="Q6GJ47"/>
<dbReference type="KEGG" id="sar:SAR0630"/>
<dbReference type="HOGENOM" id="CLU_007100_2_0_9"/>
<dbReference type="Proteomes" id="UP000000596">
    <property type="component" value="Chromosome"/>
</dbReference>
<dbReference type="GO" id="GO:0005886">
    <property type="term" value="C:plasma membrane"/>
    <property type="evidence" value="ECO:0007669"/>
    <property type="project" value="UniProtKB-SubCell"/>
</dbReference>
<dbReference type="GO" id="GO:0015297">
    <property type="term" value="F:antiporter activity"/>
    <property type="evidence" value="ECO:0007669"/>
    <property type="project" value="UniProtKB-KW"/>
</dbReference>
<dbReference type="GO" id="GO:0006811">
    <property type="term" value="P:monoatomic ion transport"/>
    <property type="evidence" value="ECO:0007669"/>
    <property type="project" value="UniProtKB-KW"/>
</dbReference>
<dbReference type="InterPro" id="IPR050616">
    <property type="entry name" value="CPA3_Na-H_Antiporter_A"/>
</dbReference>
<dbReference type="InterPro" id="IPR025383">
    <property type="entry name" value="MrpA_C/MbhD"/>
</dbReference>
<dbReference type="InterPro" id="IPR046806">
    <property type="entry name" value="MrpA_C/MbhE"/>
</dbReference>
<dbReference type="InterPro" id="IPR001750">
    <property type="entry name" value="ND/Mrp_TM"/>
</dbReference>
<dbReference type="InterPro" id="IPR001516">
    <property type="entry name" value="Proton_antipo_N"/>
</dbReference>
<dbReference type="NCBIfam" id="NF009286">
    <property type="entry name" value="PRK12646.1"/>
    <property type="match status" value="1"/>
</dbReference>
<dbReference type="PANTHER" id="PTHR43373">
    <property type="entry name" value="NA(+)/H(+) ANTIPORTER SUBUNIT"/>
    <property type="match status" value="1"/>
</dbReference>
<dbReference type="PANTHER" id="PTHR43373:SF1">
    <property type="entry name" value="NA(+)_H(+) ANTIPORTER SUBUNIT A"/>
    <property type="match status" value="1"/>
</dbReference>
<dbReference type="Pfam" id="PF13244">
    <property type="entry name" value="MbhD"/>
    <property type="match status" value="1"/>
</dbReference>
<dbReference type="Pfam" id="PF20501">
    <property type="entry name" value="MbhE"/>
    <property type="match status" value="1"/>
</dbReference>
<dbReference type="Pfam" id="PF00361">
    <property type="entry name" value="Proton_antipo_M"/>
    <property type="match status" value="1"/>
</dbReference>
<dbReference type="Pfam" id="PF00662">
    <property type="entry name" value="Proton_antipo_N"/>
    <property type="match status" value="1"/>
</dbReference>
<dbReference type="PRINTS" id="PR01434">
    <property type="entry name" value="NADHDHGNASE5"/>
</dbReference>
<accession>Q6GJ47</accession>
<organism>
    <name type="scientific">Staphylococcus aureus (strain MRSA252)</name>
    <dbReference type="NCBI Taxonomy" id="282458"/>
    <lineage>
        <taxon>Bacteria</taxon>
        <taxon>Bacillati</taxon>
        <taxon>Bacillota</taxon>
        <taxon>Bacilli</taxon>
        <taxon>Bacillales</taxon>
        <taxon>Staphylococcaceae</taxon>
        <taxon>Staphylococcus</taxon>
    </lineage>
</organism>